<sequence>MSSSIVLSNNNSNSNSMSMIGQSPPCCSDVPNTPASEEMTRMVKNVVASWEWVPLGKDKVGIIIPADQDHRQVHKSRFVDLLEFCDETMKVKEVIAVFGRADLTVAAGFPRTLRYVGFRVVAPENFPPTLDATTHFAMTYVV</sequence>
<keyword id="KW-1185">Reference proteome</keyword>
<keyword id="KW-0688">Ribosomal frameshifting</keyword>
<proteinExistence type="evidence at transcript level"/>
<evidence type="ECO:0000250" key="1">
    <source>
        <dbReference type="UniProtKB" id="P54368"/>
    </source>
</evidence>
<evidence type="ECO:0000256" key="2">
    <source>
        <dbReference type="SAM" id="MobiDB-lite"/>
    </source>
</evidence>
<evidence type="ECO:0000305" key="3"/>
<organism>
    <name type="scientific">Pristionchus pacificus</name>
    <name type="common">Parasitic nematode</name>
    <dbReference type="NCBI Taxonomy" id="54126"/>
    <lineage>
        <taxon>Eukaryota</taxon>
        <taxon>Metazoa</taxon>
        <taxon>Ecdysozoa</taxon>
        <taxon>Nematoda</taxon>
        <taxon>Chromadorea</taxon>
        <taxon>Rhabditida</taxon>
        <taxon>Rhabditina</taxon>
        <taxon>Diplogasteromorpha</taxon>
        <taxon>Diplogasteroidea</taxon>
        <taxon>Neodiplogasteridae</taxon>
        <taxon>Pristionchus</taxon>
    </lineage>
</organism>
<dbReference type="EMBL" id="AF217280">
    <property type="protein sequence ID" value="AAF68271.1"/>
    <property type="molecule type" value="mRNA"/>
</dbReference>
<dbReference type="SMR" id="Q9NHZ4"/>
<dbReference type="FunCoup" id="Q9NHZ4">
    <property type="interactions" value="194"/>
</dbReference>
<dbReference type="STRING" id="54126.Q9NHZ4"/>
<dbReference type="InParanoid" id="Q9NHZ4"/>
<dbReference type="Proteomes" id="UP000005239">
    <property type="component" value="Unplaced"/>
</dbReference>
<dbReference type="GO" id="GO:0005737">
    <property type="term" value="C:cytoplasm"/>
    <property type="evidence" value="ECO:0000318"/>
    <property type="project" value="GO_Central"/>
</dbReference>
<dbReference type="GO" id="GO:0005634">
    <property type="term" value="C:nucleus"/>
    <property type="evidence" value="ECO:0000318"/>
    <property type="project" value="GO_Central"/>
</dbReference>
<dbReference type="GO" id="GO:0008073">
    <property type="term" value="F:ornithine decarboxylase inhibitor activity"/>
    <property type="evidence" value="ECO:0000318"/>
    <property type="project" value="GO_Central"/>
</dbReference>
<dbReference type="GO" id="GO:0045732">
    <property type="term" value="P:positive regulation of protein catabolic process"/>
    <property type="evidence" value="ECO:0000318"/>
    <property type="project" value="GO_Central"/>
</dbReference>
<dbReference type="GO" id="GO:0075523">
    <property type="term" value="P:viral translational frameshifting"/>
    <property type="evidence" value="ECO:0007669"/>
    <property type="project" value="UniProtKB-KW"/>
</dbReference>
<dbReference type="Gene3D" id="3.40.630.60">
    <property type="match status" value="1"/>
</dbReference>
<dbReference type="InterPro" id="IPR016181">
    <property type="entry name" value="Acyl_CoA_acyltransferase"/>
</dbReference>
<dbReference type="InterPro" id="IPR002993">
    <property type="entry name" value="ODC_AZ"/>
</dbReference>
<dbReference type="InterPro" id="IPR038581">
    <property type="entry name" value="ODC_AZ_sf"/>
</dbReference>
<dbReference type="PANTHER" id="PTHR10279">
    <property type="entry name" value="ORNITHINE DECARBOXYLASE ANTIZYME"/>
    <property type="match status" value="1"/>
</dbReference>
<dbReference type="PANTHER" id="PTHR10279:SF10">
    <property type="entry name" value="ORNITHINE DECARBOXYLASE ANTIZYME"/>
    <property type="match status" value="1"/>
</dbReference>
<dbReference type="Pfam" id="PF02100">
    <property type="entry name" value="ODC_AZ"/>
    <property type="match status" value="1"/>
</dbReference>
<dbReference type="SUPFAM" id="SSF55729">
    <property type="entry name" value="Acyl-CoA N-acyltransferases (Nat)"/>
    <property type="match status" value="1"/>
</dbReference>
<dbReference type="PROSITE" id="PS01337">
    <property type="entry name" value="ODC_AZ"/>
    <property type="match status" value="1"/>
</dbReference>
<name>OAZ_PRIPA</name>
<reference key="1">
    <citation type="journal article" date="2000" name="EMBO J.">
        <title>Conservation of polyamine regulation by translational frameshifting from yeast to mammals.</title>
        <authorList>
            <person name="Ivanov I.P."/>
            <person name="Matsufuji S."/>
            <person name="Murakami Y."/>
            <person name="Gesteland R.F."/>
            <person name="Atkins J.F."/>
        </authorList>
    </citation>
    <scope>NUCLEOTIDE SEQUENCE [MRNA]</scope>
</reference>
<accession>Q9NHZ4</accession>
<comment type="function">
    <text evidence="1">Ornithine decarboxylase (ODC) antizyme protein that negatively regulates ODC activity and intracellular polyamine biosynthesis and uptake in response to increased intracellular polyamine levels. Binds to ODC monomers, inhibiting the assembly of the functional ODC homodimer, and targets the monomers for ubiquitin-independent proteolytic destruction by the 26S proteasome.</text>
</comment>
<comment type="subunit">
    <text evidence="1">Interacts with ODC1 and thereby sterically blocks ODC homodimerization.</text>
</comment>
<comment type="alternative products">
    <event type="ribosomal frameshifting"/>
    <isoform>
        <id>Q9NHZ4-1</id>
        <name>1</name>
        <sequence type="displayed"/>
    </isoform>
    <text>A ribosomal frameshift occurs between the codons for Ser-28 and Asp-29. An autoregulatory mechanism enables modulation of frameshifting according to the cellular concentration of polyamines.</text>
</comment>
<comment type="similarity">
    <text evidence="3">Belongs to the ODC antizyme family.</text>
</comment>
<feature type="chain" id="PRO_0000220865" description="Ornithine decarboxylase antizyme">
    <location>
        <begin position="1"/>
        <end position="142"/>
    </location>
</feature>
<feature type="region of interest" description="Disordered" evidence="2">
    <location>
        <begin position="1"/>
        <end position="34"/>
    </location>
</feature>
<feature type="compositionally biased region" description="Low complexity" evidence="2">
    <location>
        <begin position="1"/>
        <end position="19"/>
    </location>
</feature>
<protein>
    <recommendedName>
        <fullName>Ornithine decarboxylase antizyme</fullName>
        <shortName>ODC-Az</shortName>
    </recommendedName>
</protein>